<evidence type="ECO:0000255" key="1">
    <source>
        <dbReference type="HAMAP-Rule" id="MF_01152"/>
    </source>
</evidence>
<keyword id="KW-0143">Chaperone</keyword>
<keyword id="KW-0963">Cytoplasm</keyword>
<keyword id="KW-0235">DNA replication</keyword>
<keyword id="KW-0479">Metal-binding</keyword>
<keyword id="KW-0677">Repeat</keyword>
<keyword id="KW-0346">Stress response</keyword>
<keyword id="KW-0862">Zinc</keyword>
<keyword id="KW-0863">Zinc-finger</keyword>
<sequence>MNNTEYYERLGVDKNASQDEIKKAYRKMSKKYHPDLNKEEGAEDKYKEVQEAYETLSDEQKRAAYDQYGEAGANGGFGGGGFGGASGFSGFGGASGGFGGFEDIFSSFFGGGGAQVNPNAPRQGDDLQYRINLKFEEAIFGVEKQVKYNREELCHTCDGSGAKAGTHPETCHKCGGRGQINVVRDTPLGRMQTQTTCDVCHGTGKEIKEKCTTCHGSGHEKVAHTVKVTVPAGVETGQKMRLQGQGDAGVNGGPYGDLYVVFQVEASDKFERDGAEIYYKMPMDFVQAALGDEVEVPTVHGNVKLKIPAGTQTGANFRLKGKGAPKLRGSGNGDQYVIINIVTPKNMNQAQKEALQAFAKASGIEVSGSGKKGFFDKFK</sequence>
<name>DNAJ_LACLS</name>
<proteinExistence type="inferred from homology"/>
<dbReference type="EMBL" id="CP000425">
    <property type="protein sequence ID" value="ABJ73957.1"/>
    <property type="molecule type" value="Genomic_DNA"/>
</dbReference>
<dbReference type="RefSeq" id="WP_011677265.1">
    <property type="nucleotide sequence ID" value="NC_008527.1"/>
</dbReference>
<dbReference type="SMR" id="Q02VR5"/>
<dbReference type="KEGG" id="llc:LACR_2529"/>
<dbReference type="HOGENOM" id="CLU_017633_0_0_9"/>
<dbReference type="Proteomes" id="UP000000240">
    <property type="component" value="Chromosome"/>
</dbReference>
<dbReference type="GO" id="GO:0005737">
    <property type="term" value="C:cytoplasm"/>
    <property type="evidence" value="ECO:0007669"/>
    <property type="project" value="UniProtKB-SubCell"/>
</dbReference>
<dbReference type="GO" id="GO:0005524">
    <property type="term" value="F:ATP binding"/>
    <property type="evidence" value="ECO:0007669"/>
    <property type="project" value="InterPro"/>
</dbReference>
<dbReference type="GO" id="GO:0031072">
    <property type="term" value="F:heat shock protein binding"/>
    <property type="evidence" value="ECO:0007669"/>
    <property type="project" value="InterPro"/>
</dbReference>
<dbReference type="GO" id="GO:0051082">
    <property type="term" value="F:unfolded protein binding"/>
    <property type="evidence" value="ECO:0007669"/>
    <property type="project" value="UniProtKB-UniRule"/>
</dbReference>
<dbReference type="GO" id="GO:0008270">
    <property type="term" value="F:zinc ion binding"/>
    <property type="evidence" value="ECO:0007669"/>
    <property type="project" value="UniProtKB-UniRule"/>
</dbReference>
<dbReference type="GO" id="GO:0051085">
    <property type="term" value="P:chaperone cofactor-dependent protein refolding"/>
    <property type="evidence" value="ECO:0007669"/>
    <property type="project" value="TreeGrafter"/>
</dbReference>
<dbReference type="GO" id="GO:0006260">
    <property type="term" value="P:DNA replication"/>
    <property type="evidence" value="ECO:0007669"/>
    <property type="project" value="UniProtKB-KW"/>
</dbReference>
<dbReference type="GO" id="GO:0042026">
    <property type="term" value="P:protein refolding"/>
    <property type="evidence" value="ECO:0007669"/>
    <property type="project" value="TreeGrafter"/>
</dbReference>
<dbReference type="GO" id="GO:0009408">
    <property type="term" value="P:response to heat"/>
    <property type="evidence" value="ECO:0007669"/>
    <property type="project" value="InterPro"/>
</dbReference>
<dbReference type="CDD" id="cd06257">
    <property type="entry name" value="DnaJ"/>
    <property type="match status" value="1"/>
</dbReference>
<dbReference type="CDD" id="cd10747">
    <property type="entry name" value="DnaJ_C"/>
    <property type="match status" value="1"/>
</dbReference>
<dbReference type="FunFam" id="1.10.287.110:FF:000031">
    <property type="entry name" value="Molecular chaperone DnaJ"/>
    <property type="match status" value="1"/>
</dbReference>
<dbReference type="FunFam" id="2.10.230.10:FF:000002">
    <property type="entry name" value="Molecular chaperone DnaJ"/>
    <property type="match status" value="1"/>
</dbReference>
<dbReference type="FunFam" id="2.60.260.20:FF:000004">
    <property type="entry name" value="Molecular chaperone DnaJ"/>
    <property type="match status" value="1"/>
</dbReference>
<dbReference type="Gene3D" id="1.10.287.110">
    <property type="entry name" value="DnaJ domain"/>
    <property type="match status" value="1"/>
</dbReference>
<dbReference type="Gene3D" id="2.10.230.10">
    <property type="entry name" value="Heat shock protein DnaJ, cysteine-rich domain"/>
    <property type="match status" value="1"/>
</dbReference>
<dbReference type="Gene3D" id="2.60.260.20">
    <property type="entry name" value="Urease metallochaperone UreE, N-terminal domain"/>
    <property type="match status" value="2"/>
</dbReference>
<dbReference type="HAMAP" id="MF_01152">
    <property type="entry name" value="DnaJ"/>
    <property type="match status" value="1"/>
</dbReference>
<dbReference type="InterPro" id="IPR012724">
    <property type="entry name" value="DnaJ"/>
</dbReference>
<dbReference type="InterPro" id="IPR002939">
    <property type="entry name" value="DnaJ_C"/>
</dbReference>
<dbReference type="InterPro" id="IPR001623">
    <property type="entry name" value="DnaJ_domain"/>
</dbReference>
<dbReference type="InterPro" id="IPR018253">
    <property type="entry name" value="DnaJ_domain_CS"/>
</dbReference>
<dbReference type="InterPro" id="IPR008971">
    <property type="entry name" value="HSP40/DnaJ_pept-bd"/>
</dbReference>
<dbReference type="InterPro" id="IPR001305">
    <property type="entry name" value="HSP_DnaJ_Cys-rich_dom"/>
</dbReference>
<dbReference type="InterPro" id="IPR036410">
    <property type="entry name" value="HSP_DnaJ_Cys-rich_dom_sf"/>
</dbReference>
<dbReference type="InterPro" id="IPR036869">
    <property type="entry name" value="J_dom_sf"/>
</dbReference>
<dbReference type="NCBIfam" id="TIGR02349">
    <property type="entry name" value="DnaJ_bact"/>
    <property type="match status" value="1"/>
</dbReference>
<dbReference type="NCBIfam" id="NF008035">
    <property type="entry name" value="PRK10767.1"/>
    <property type="match status" value="1"/>
</dbReference>
<dbReference type="NCBIfam" id="NF010869">
    <property type="entry name" value="PRK14276.1"/>
    <property type="match status" value="1"/>
</dbReference>
<dbReference type="PANTHER" id="PTHR43096:SF48">
    <property type="entry name" value="CHAPERONE PROTEIN DNAJ"/>
    <property type="match status" value="1"/>
</dbReference>
<dbReference type="PANTHER" id="PTHR43096">
    <property type="entry name" value="DNAJ HOMOLOG 1, MITOCHONDRIAL-RELATED"/>
    <property type="match status" value="1"/>
</dbReference>
<dbReference type="Pfam" id="PF00226">
    <property type="entry name" value="DnaJ"/>
    <property type="match status" value="1"/>
</dbReference>
<dbReference type="Pfam" id="PF01556">
    <property type="entry name" value="DnaJ_C"/>
    <property type="match status" value="1"/>
</dbReference>
<dbReference type="Pfam" id="PF00684">
    <property type="entry name" value="DnaJ_CXXCXGXG"/>
    <property type="match status" value="1"/>
</dbReference>
<dbReference type="PRINTS" id="PR00625">
    <property type="entry name" value="JDOMAIN"/>
</dbReference>
<dbReference type="SMART" id="SM00271">
    <property type="entry name" value="DnaJ"/>
    <property type="match status" value="1"/>
</dbReference>
<dbReference type="SUPFAM" id="SSF46565">
    <property type="entry name" value="Chaperone J-domain"/>
    <property type="match status" value="1"/>
</dbReference>
<dbReference type="SUPFAM" id="SSF57938">
    <property type="entry name" value="DnaJ/Hsp40 cysteine-rich domain"/>
    <property type="match status" value="1"/>
</dbReference>
<dbReference type="SUPFAM" id="SSF49493">
    <property type="entry name" value="HSP40/DnaJ peptide-binding domain"/>
    <property type="match status" value="2"/>
</dbReference>
<dbReference type="PROSITE" id="PS00636">
    <property type="entry name" value="DNAJ_1"/>
    <property type="match status" value="1"/>
</dbReference>
<dbReference type="PROSITE" id="PS50076">
    <property type="entry name" value="DNAJ_2"/>
    <property type="match status" value="1"/>
</dbReference>
<dbReference type="PROSITE" id="PS51188">
    <property type="entry name" value="ZF_CR"/>
    <property type="match status" value="1"/>
</dbReference>
<accession>Q02VR5</accession>
<organism>
    <name type="scientific">Lactococcus lactis subsp. cremoris (strain SK11)</name>
    <dbReference type="NCBI Taxonomy" id="272622"/>
    <lineage>
        <taxon>Bacteria</taxon>
        <taxon>Bacillati</taxon>
        <taxon>Bacillota</taxon>
        <taxon>Bacilli</taxon>
        <taxon>Lactobacillales</taxon>
        <taxon>Streptococcaceae</taxon>
        <taxon>Lactococcus</taxon>
        <taxon>Lactococcus cremoris subsp. cremoris</taxon>
    </lineage>
</organism>
<comment type="function">
    <text evidence="1">Participates actively in the response to hyperosmotic and heat shock by preventing the aggregation of stress-denatured proteins and by disaggregating proteins, also in an autonomous, DnaK-independent fashion. Unfolded proteins bind initially to DnaJ; upon interaction with the DnaJ-bound protein, DnaK hydrolyzes its bound ATP, resulting in the formation of a stable complex. GrpE releases ADP from DnaK; ATP binding to DnaK triggers the release of the substrate protein, thus completing the reaction cycle. Several rounds of ATP-dependent interactions between DnaJ, DnaK and GrpE are required for fully efficient folding. Also involved, together with DnaK and GrpE, in the DNA replication of plasmids through activation of initiation proteins.</text>
</comment>
<comment type="cofactor">
    <cofactor evidence="1">
        <name>Zn(2+)</name>
        <dbReference type="ChEBI" id="CHEBI:29105"/>
    </cofactor>
    <text evidence="1">Binds 2 Zn(2+) ions per monomer.</text>
</comment>
<comment type="subunit">
    <text evidence="1">Homodimer.</text>
</comment>
<comment type="subcellular location">
    <subcellularLocation>
        <location evidence="1">Cytoplasm</location>
    </subcellularLocation>
</comment>
<comment type="domain">
    <text evidence="1">The J domain is necessary and sufficient to stimulate DnaK ATPase activity. Zinc center 1 plays an important role in the autonomous, DnaK-independent chaperone activity of DnaJ. Zinc center 2 is essential for interaction with DnaK and for DnaJ activity.</text>
</comment>
<comment type="similarity">
    <text evidence="1">Belongs to the DnaJ family.</text>
</comment>
<protein>
    <recommendedName>
        <fullName evidence="1">Chaperone protein DnaJ</fullName>
    </recommendedName>
</protein>
<feature type="chain" id="PRO_1000085216" description="Chaperone protein DnaJ">
    <location>
        <begin position="1"/>
        <end position="379"/>
    </location>
</feature>
<feature type="domain" description="J" evidence="1">
    <location>
        <begin position="5"/>
        <end position="69"/>
    </location>
</feature>
<feature type="repeat" description="CXXCXGXG motif">
    <location>
        <begin position="154"/>
        <end position="161"/>
    </location>
</feature>
<feature type="repeat" description="CXXCXGXG motif">
    <location>
        <begin position="171"/>
        <end position="178"/>
    </location>
</feature>
<feature type="repeat" description="CXXCXGXG motif">
    <location>
        <begin position="197"/>
        <end position="204"/>
    </location>
</feature>
<feature type="repeat" description="CXXCXGXG motif">
    <location>
        <begin position="211"/>
        <end position="218"/>
    </location>
</feature>
<feature type="zinc finger region" description="CR-type" evidence="1">
    <location>
        <begin position="141"/>
        <end position="223"/>
    </location>
</feature>
<feature type="binding site" evidence="1">
    <location>
        <position position="154"/>
    </location>
    <ligand>
        <name>Zn(2+)</name>
        <dbReference type="ChEBI" id="CHEBI:29105"/>
        <label>1</label>
    </ligand>
</feature>
<feature type="binding site" evidence="1">
    <location>
        <position position="157"/>
    </location>
    <ligand>
        <name>Zn(2+)</name>
        <dbReference type="ChEBI" id="CHEBI:29105"/>
        <label>1</label>
    </ligand>
</feature>
<feature type="binding site" evidence="1">
    <location>
        <position position="171"/>
    </location>
    <ligand>
        <name>Zn(2+)</name>
        <dbReference type="ChEBI" id="CHEBI:29105"/>
        <label>2</label>
    </ligand>
</feature>
<feature type="binding site" evidence="1">
    <location>
        <position position="174"/>
    </location>
    <ligand>
        <name>Zn(2+)</name>
        <dbReference type="ChEBI" id="CHEBI:29105"/>
        <label>2</label>
    </ligand>
</feature>
<feature type="binding site" evidence="1">
    <location>
        <position position="197"/>
    </location>
    <ligand>
        <name>Zn(2+)</name>
        <dbReference type="ChEBI" id="CHEBI:29105"/>
        <label>2</label>
    </ligand>
</feature>
<feature type="binding site" evidence="1">
    <location>
        <position position="200"/>
    </location>
    <ligand>
        <name>Zn(2+)</name>
        <dbReference type="ChEBI" id="CHEBI:29105"/>
        <label>2</label>
    </ligand>
</feature>
<feature type="binding site" evidence="1">
    <location>
        <position position="211"/>
    </location>
    <ligand>
        <name>Zn(2+)</name>
        <dbReference type="ChEBI" id="CHEBI:29105"/>
        <label>1</label>
    </ligand>
</feature>
<feature type="binding site" evidence="1">
    <location>
        <position position="214"/>
    </location>
    <ligand>
        <name>Zn(2+)</name>
        <dbReference type="ChEBI" id="CHEBI:29105"/>
        <label>1</label>
    </ligand>
</feature>
<gene>
    <name evidence="1" type="primary">dnaJ</name>
    <name type="ordered locus">LACR_2529</name>
</gene>
<reference key="1">
    <citation type="journal article" date="2006" name="Proc. Natl. Acad. Sci. U.S.A.">
        <title>Comparative genomics of the lactic acid bacteria.</title>
        <authorList>
            <person name="Makarova K.S."/>
            <person name="Slesarev A."/>
            <person name="Wolf Y.I."/>
            <person name="Sorokin A."/>
            <person name="Mirkin B."/>
            <person name="Koonin E.V."/>
            <person name="Pavlov A."/>
            <person name="Pavlova N."/>
            <person name="Karamychev V."/>
            <person name="Polouchine N."/>
            <person name="Shakhova V."/>
            <person name="Grigoriev I."/>
            <person name="Lou Y."/>
            <person name="Rohksar D."/>
            <person name="Lucas S."/>
            <person name="Huang K."/>
            <person name="Goodstein D.M."/>
            <person name="Hawkins T."/>
            <person name="Plengvidhya V."/>
            <person name="Welker D."/>
            <person name="Hughes J."/>
            <person name="Goh Y."/>
            <person name="Benson A."/>
            <person name="Baldwin K."/>
            <person name="Lee J.-H."/>
            <person name="Diaz-Muniz I."/>
            <person name="Dosti B."/>
            <person name="Smeianov V."/>
            <person name="Wechter W."/>
            <person name="Barabote R."/>
            <person name="Lorca G."/>
            <person name="Altermann E."/>
            <person name="Barrangou R."/>
            <person name="Ganesan B."/>
            <person name="Xie Y."/>
            <person name="Rawsthorne H."/>
            <person name="Tamir D."/>
            <person name="Parker C."/>
            <person name="Breidt F."/>
            <person name="Broadbent J.R."/>
            <person name="Hutkins R."/>
            <person name="O'Sullivan D."/>
            <person name="Steele J."/>
            <person name="Unlu G."/>
            <person name="Saier M.H. Jr."/>
            <person name="Klaenhammer T."/>
            <person name="Richardson P."/>
            <person name="Kozyavkin S."/>
            <person name="Weimer B.C."/>
            <person name="Mills D.A."/>
        </authorList>
    </citation>
    <scope>NUCLEOTIDE SEQUENCE [LARGE SCALE GENOMIC DNA]</scope>
    <source>
        <strain>SK11</strain>
    </source>
</reference>